<protein>
    <recommendedName>
        <fullName evidence="1">tRNA (guanine-N(1)-)-methyltransferase</fullName>
        <ecNumber evidence="1">2.1.1.228</ecNumber>
    </recommendedName>
    <alternativeName>
        <fullName evidence="1">M1G-methyltransferase</fullName>
    </alternativeName>
    <alternativeName>
        <fullName evidence="1">tRNA [GM37] methyltransferase</fullName>
    </alternativeName>
</protein>
<feature type="chain" id="PRO_1000082537" description="tRNA (guanine-N(1)-)-methyltransferase">
    <location>
        <begin position="1"/>
        <end position="242"/>
    </location>
</feature>
<feature type="binding site" evidence="1">
    <location>
        <position position="113"/>
    </location>
    <ligand>
        <name>S-adenosyl-L-methionine</name>
        <dbReference type="ChEBI" id="CHEBI:59789"/>
    </ligand>
</feature>
<feature type="binding site" evidence="1">
    <location>
        <begin position="133"/>
        <end position="138"/>
    </location>
    <ligand>
        <name>S-adenosyl-L-methionine</name>
        <dbReference type="ChEBI" id="CHEBI:59789"/>
    </ligand>
</feature>
<sequence length="242" mass="26949">MRLGVVTLFPEMFRAVTDFGVTGRAVKNGLLELQTWNPRDFTHDKHKTVDDRPYGGGPGMLMMVQPLRDAIHAAKAATGDSAKVIYLSPQGRKLTQQGVEELVKSDSLILVCGRYEGIDERIIQTEVDEEWSIGDYVLSGGELPAMTLIDSVSRLVPGVLGKKASAEQDSFSDGLLDCPHYTRPETLDNLDVPAVLLSGNHEHIRRWRLQQSLGRTLLRRPDLLENLALTDEQTKLLNEFVE</sequence>
<accession>A8FSE9</accession>
<gene>
    <name evidence="1" type="primary">trmD</name>
    <name type="ordered locus">Ssed_1161</name>
</gene>
<keyword id="KW-0963">Cytoplasm</keyword>
<keyword id="KW-0489">Methyltransferase</keyword>
<keyword id="KW-1185">Reference proteome</keyword>
<keyword id="KW-0949">S-adenosyl-L-methionine</keyword>
<keyword id="KW-0808">Transferase</keyword>
<keyword id="KW-0819">tRNA processing</keyword>
<comment type="function">
    <text evidence="1">Specifically methylates guanosine-37 in various tRNAs.</text>
</comment>
<comment type="catalytic activity">
    <reaction evidence="1">
        <text>guanosine(37) in tRNA + S-adenosyl-L-methionine = N(1)-methylguanosine(37) in tRNA + S-adenosyl-L-homocysteine + H(+)</text>
        <dbReference type="Rhea" id="RHEA:36899"/>
        <dbReference type="Rhea" id="RHEA-COMP:10145"/>
        <dbReference type="Rhea" id="RHEA-COMP:10147"/>
        <dbReference type="ChEBI" id="CHEBI:15378"/>
        <dbReference type="ChEBI" id="CHEBI:57856"/>
        <dbReference type="ChEBI" id="CHEBI:59789"/>
        <dbReference type="ChEBI" id="CHEBI:73542"/>
        <dbReference type="ChEBI" id="CHEBI:74269"/>
        <dbReference type="EC" id="2.1.1.228"/>
    </reaction>
</comment>
<comment type="subunit">
    <text evidence="1">Homodimer.</text>
</comment>
<comment type="subcellular location">
    <subcellularLocation>
        <location evidence="1">Cytoplasm</location>
    </subcellularLocation>
</comment>
<comment type="similarity">
    <text evidence="1">Belongs to the RNA methyltransferase TrmD family.</text>
</comment>
<evidence type="ECO:0000255" key="1">
    <source>
        <dbReference type="HAMAP-Rule" id="MF_00605"/>
    </source>
</evidence>
<proteinExistence type="inferred from homology"/>
<dbReference type="EC" id="2.1.1.228" evidence="1"/>
<dbReference type="EMBL" id="CP000821">
    <property type="protein sequence ID" value="ABV35772.1"/>
    <property type="molecule type" value="Genomic_DNA"/>
</dbReference>
<dbReference type="RefSeq" id="WP_012141508.1">
    <property type="nucleotide sequence ID" value="NC_009831.1"/>
</dbReference>
<dbReference type="SMR" id="A8FSE9"/>
<dbReference type="STRING" id="425104.Ssed_1161"/>
<dbReference type="KEGG" id="sse:Ssed_1161"/>
<dbReference type="eggNOG" id="COG0336">
    <property type="taxonomic scope" value="Bacteria"/>
</dbReference>
<dbReference type="HOGENOM" id="CLU_047363_0_1_6"/>
<dbReference type="OrthoDB" id="9807416at2"/>
<dbReference type="Proteomes" id="UP000002015">
    <property type="component" value="Chromosome"/>
</dbReference>
<dbReference type="GO" id="GO:0005829">
    <property type="term" value="C:cytosol"/>
    <property type="evidence" value="ECO:0007669"/>
    <property type="project" value="TreeGrafter"/>
</dbReference>
<dbReference type="GO" id="GO:0052906">
    <property type="term" value="F:tRNA (guanine(37)-N1)-methyltransferase activity"/>
    <property type="evidence" value="ECO:0007669"/>
    <property type="project" value="UniProtKB-UniRule"/>
</dbReference>
<dbReference type="GO" id="GO:0002939">
    <property type="term" value="P:tRNA N1-guanine methylation"/>
    <property type="evidence" value="ECO:0007669"/>
    <property type="project" value="TreeGrafter"/>
</dbReference>
<dbReference type="CDD" id="cd18080">
    <property type="entry name" value="TrmD-like"/>
    <property type="match status" value="1"/>
</dbReference>
<dbReference type="FunFam" id="1.10.1270.20:FF:000001">
    <property type="entry name" value="tRNA (guanine-N(1)-)-methyltransferase"/>
    <property type="match status" value="1"/>
</dbReference>
<dbReference type="FunFam" id="3.40.1280.10:FF:000001">
    <property type="entry name" value="tRNA (guanine-N(1)-)-methyltransferase"/>
    <property type="match status" value="1"/>
</dbReference>
<dbReference type="Gene3D" id="3.40.1280.10">
    <property type="match status" value="1"/>
</dbReference>
<dbReference type="Gene3D" id="1.10.1270.20">
    <property type="entry name" value="tRNA(m1g37)methyltransferase, domain 2"/>
    <property type="match status" value="1"/>
</dbReference>
<dbReference type="HAMAP" id="MF_00605">
    <property type="entry name" value="TrmD"/>
    <property type="match status" value="1"/>
</dbReference>
<dbReference type="InterPro" id="IPR029028">
    <property type="entry name" value="Alpha/beta_knot_MTases"/>
</dbReference>
<dbReference type="InterPro" id="IPR023148">
    <property type="entry name" value="tRNA_m1G_MeTrfase_C_sf"/>
</dbReference>
<dbReference type="InterPro" id="IPR002649">
    <property type="entry name" value="tRNA_m1G_MeTrfase_TrmD"/>
</dbReference>
<dbReference type="InterPro" id="IPR029026">
    <property type="entry name" value="tRNA_m1G_MTases_N"/>
</dbReference>
<dbReference type="InterPro" id="IPR016009">
    <property type="entry name" value="tRNA_MeTrfase_TRMD/TRM10"/>
</dbReference>
<dbReference type="NCBIfam" id="NF000648">
    <property type="entry name" value="PRK00026.1"/>
    <property type="match status" value="1"/>
</dbReference>
<dbReference type="NCBIfam" id="TIGR00088">
    <property type="entry name" value="trmD"/>
    <property type="match status" value="1"/>
</dbReference>
<dbReference type="PANTHER" id="PTHR46417">
    <property type="entry name" value="TRNA (GUANINE-N(1)-)-METHYLTRANSFERASE"/>
    <property type="match status" value="1"/>
</dbReference>
<dbReference type="PANTHER" id="PTHR46417:SF1">
    <property type="entry name" value="TRNA (GUANINE-N(1)-)-METHYLTRANSFERASE"/>
    <property type="match status" value="1"/>
</dbReference>
<dbReference type="Pfam" id="PF01746">
    <property type="entry name" value="tRNA_m1G_MT"/>
    <property type="match status" value="1"/>
</dbReference>
<dbReference type="PIRSF" id="PIRSF000386">
    <property type="entry name" value="tRNA_mtase"/>
    <property type="match status" value="1"/>
</dbReference>
<dbReference type="SUPFAM" id="SSF75217">
    <property type="entry name" value="alpha/beta knot"/>
    <property type="match status" value="1"/>
</dbReference>
<reference key="1">
    <citation type="submission" date="2007-08" db="EMBL/GenBank/DDBJ databases">
        <title>Complete sequence of Shewanella sediminis HAW-EB3.</title>
        <authorList>
            <consortium name="US DOE Joint Genome Institute"/>
            <person name="Copeland A."/>
            <person name="Lucas S."/>
            <person name="Lapidus A."/>
            <person name="Barry K."/>
            <person name="Glavina del Rio T."/>
            <person name="Dalin E."/>
            <person name="Tice H."/>
            <person name="Pitluck S."/>
            <person name="Chertkov O."/>
            <person name="Brettin T."/>
            <person name="Bruce D."/>
            <person name="Detter J.C."/>
            <person name="Han C."/>
            <person name="Schmutz J."/>
            <person name="Larimer F."/>
            <person name="Land M."/>
            <person name="Hauser L."/>
            <person name="Kyrpides N."/>
            <person name="Kim E."/>
            <person name="Zhao J.-S."/>
            <person name="Richardson P."/>
        </authorList>
    </citation>
    <scope>NUCLEOTIDE SEQUENCE [LARGE SCALE GENOMIC DNA]</scope>
    <source>
        <strain>HAW-EB3</strain>
    </source>
</reference>
<name>TRMD_SHESH</name>
<organism>
    <name type="scientific">Shewanella sediminis (strain HAW-EB3)</name>
    <dbReference type="NCBI Taxonomy" id="425104"/>
    <lineage>
        <taxon>Bacteria</taxon>
        <taxon>Pseudomonadati</taxon>
        <taxon>Pseudomonadota</taxon>
        <taxon>Gammaproteobacteria</taxon>
        <taxon>Alteromonadales</taxon>
        <taxon>Shewanellaceae</taxon>
        <taxon>Shewanella</taxon>
    </lineage>
</organism>